<accession>B0RUB3</accession>
<comment type="subcellular location">
    <subcellularLocation>
        <location evidence="1">Cell inner membrane</location>
        <topology evidence="1">Multi-pass membrane protein</topology>
    </subcellularLocation>
</comment>
<comment type="similarity">
    <text evidence="1">Belongs to the UPF0761 family.</text>
</comment>
<keyword id="KW-0997">Cell inner membrane</keyword>
<keyword id="KW-1003">Cell membrane</keyword>
<keyword id="KW-0472">Membrane</keyword>
<keyword id="KW-0812">Transmembrane</keyword>
<keyword id="KW-1133">Transmembrane helix</keyword>
<gene>
    <name type="ordered locus">xcc-b100_3490</name>
</gene>
<evidence type="ECO:0000255" key="1">
    <source>
        <dbReference type="HAMAP-Rule" id="MF_00672"/>
    </source>
</evidence>
<feature type="chain" id="PRO_1000131570" description="UPF0761 membrane protein xcc-b100_3490">
    <location>
        <begin position="1"/>
        <end position="425"/>
    </location>
</feature>
<feature type="transmembrane region" description="Helical" evidence="1">
    <location>
        <begin position="48"/>
        <end position="68"/>
    </location>
</feature>
<feature type="transmembrane region" description="Helical" evidence="1">
    <location>
        <begin position="105"/>
        <end position="125"/>
    </location>
</feature>
<feature type="transmembrane region" description="Helical" evidence="1">
    <location>
        <begin position="154"/>
        <end position="174"/>
    </location>
</feature>
<feature type="transmembrane region" description="Helical" evidence="1">
    <location>
        <begin position="182"/>
        <end position="202"/>
    </location>
</feature>
<feature type="transmembrane region" description="Helical" evidence="1">
    <location>
        <begin position="216"/>
        <end position="236"/>
    </location>
</feature>
<feature type="transmembrane region" description="Helical" evidence="1">
    <location>
        <begin position="250"/>
        <end position="270"/>
    </location>
</feature>
<proteinExistence type="inferred from homology"/>
<reference key="1">
    <citation type="journal article" date="2008" name="J. Biotechnol.">
        <title>The genome of Xanthomonas campestris pv. campestris B100 and its use for the reconstruction of metabolic pathways involved in xanthan biosynthesis.</title>
        <authorList>
            <person name="Vorhoelter F.-J."/>
            <person name="Schneiker S."/>
            <person name="Goesmann A."/>
            <person name="Krause L."/>
            <person name="Bekel T."/>
            <person name="Kaiser O."/>
            <person name="Linke B."/>
            <person name="Patschkowski T."/>
            <person name="Rueckert C."/>
            <person name="Schmid J."/>
            <person name="Sidhu V.K."/>
            <person name="Sieber V."/>
            <person name="Tauch A."/>
            <person name="Watt S.A."/>
            <person name="Weisshaar B."/>
            <person name="Becker A."/>
            <person name="Niehaus K."/>
            <person name="Puehler A."/>
        </authorList>
    </citation>
    <scope>NUCLEOTIDE SEQUENCE [LARGE SCALE GENOMIC DNA]</scope>
    <source>
        <strain>B100</strain>
    </source>
</reference>
<sequence length="425" mass="48237">MSRVNTMHQWKERLRDRARTASFGRFLWRRFLDDRLFQAAASLAYTTVFALVPLAIVVFGVLSAFPAFNEWKDALTDFIFNNFVPGAARSVQNYLNRSLEDLGKFTVAGMVALVASLLITLHSIEQTFNSIWRVAAARPKVTRFLIYWTVLTLGTMLAAASMAMAAYVFALPLFRTTEGQWLAEFAWRLAPMAVEFVCIVLIYRVVPQHAVRLRHALPGALLAVILMEIVKWGFGFYLGNFQTYQRIYGALSALPILLLWIYLSWVSVLLGASLASSMSAFRYQPEAMRLPPGFEIYGLLRLLGRFRQARLHGNGLDEDRILALEPMLTDTLMQELLCELKRIRLLRRDERSNWLLARDLDVVPLAELYESCQLRVPVEDRPLPCRDDPYGQAAAAALEQLRQPLRSVLAQPVGDLYTHLPGDPP</sequence>
<protein>
    <recommendedName>
        <fullName evidence="1">UPF0761 membrane protein xcc-b100_3490</fullName>
    </recommendedName>
</protein>
<organism>
    <name type="scientific">Xanthomonas campestris pv. campestris (strain B100)</name>
    <dbReference type="NCBI Taxonomy" id="509169"/>
    <lineage>
        <taxon>Bacteria</taxon>
        <taxon>Pseudomonadati</taxon>
        <taxon>Pseudomonadota</taxon>
        <taxon>Gammaproteobacteria</taxon>
        <taxon>Lysobacterales</taxon>
        <taxon>Lysobacteraceae</taxon>
        <taxon>Xanthomonas</taxon>
    </lineage>
</organism>
<dbReference type="EMBL" id="AM920689">
    <property type="protein sequence ID" value="CAP52855.1"/>
    <property type="molecule type" value="Genomic_DNA"/>
</dbReference>
<dbReference type="SMR" id="B0RUB3"/>
<dbReference type="KEGG" id="xca:xcc-b100_3490"/>
<dbReference type="HOGENOM" id="CLU_032288_1_0_6"/>
<dbReference type="Proteomes" id="UP000001188">
    <property type="component" value="Chromosome"/>
</dbReference>
<dbReference type="GO" id="GO:0005886">
    <property type="term" value="C:plasma membrane"/>
    <property type="evidence" value="ECO:0007669"/>
    <property type="project" value="UniProtKB-SubCell"/>
</dbReference>
<dbReference type="HAMAP" id="MF_00672">
    <property type="entry name" value="UPF0761"/>
    <property type="match status" value="1"/>
</dbReference>
<dbReference type="InterPro" id="IPR023679">
    <property type="entry name" value="UPF0761_bac"/>
</dbReference>
<dbReference type="InterPro" id="IPR017039">
    <property type="entry name" value="Virul_fac_BrkB"/>
</dbReference>
<dbReference type="NCBIfam" id="NF003256">
    <property type="entry name" value="PRK04214.1"/>
    <property type="match status" value="1"/>
</dbReference>
<dbReference type="NCBIfam" id="TIGR00765">
    <property type="entry name" value="yihY_not_rbn"/>
    <property type="match status" value="1"/>
</dbReference>
<dbReference type="PANTHER" id="PTHR30213">
    <property type="entry name" value="INNER MEMBRANE PROTEIN YHJD"/>
    <property type="match status" value="1"/>
</dbReference>
<dbReference type="PANTHER" id="PTHR30213:SF0">
    <property type="entry name" value="UPF0761 MEMBRANE PROTEIN YIHY"/>
    <property type="match status" value="1"/>
</dbReference>
<dbReference type="Pfam" id="PF03631">
    <property type="entry name" value="Virul_fac_BrkB"/>
    <property type="match status" value="1"/>
</dbReference>
<name>Y3490_XANCB</name>